<comment type="function">
    <text evidence="1">The glycine cleavage system catalyzes the degradation of glycine. The P protein binds the alpha-amino group of glycine through its pyridoxal phosphate cofactor; CO(2) is released and the remaining methylamine moiety is then transferred to the lipoamide cofactor of the H protein.</text>
</comment>
<comment type="catalytic activity">
    <reaction evidence="1">
        <text>N(6)-[(R)-lipoyl]-L-lysyl-[glycine-cleavage complex H protein] + glycine + H(+) = N(6)-[(R)-S(8)-aminomethyldihydrolipoyl]-L-lysyl-[glycine-cleavage complex H protein] + CO2</text>
        <dbReference type="Rhea" id="RHEA:24304"/>
        <dbReference type="Rhea" id="RHEA-COMP:10494"/>
        <dbReference type="Rhea" id="RHEA-COMP:10495"/>
        <dbReference type="ChEBI" id="CHEBI:15378"/>
        <dbReference type="ChEBI" id="CHEBI:16526"/>
        <dbReference type="ChEBI" id="CHEBI:57305"/>
        <dbReference type="ChEBI" id="CHEBI:83099"/>
        <dbReference type="ChEBI" id="CHEBI:83143"/>
        <dbReference type="EC" id="1.4.4.2"/>
    </reaction>
</comment>
<comment type="subunit">
    <text evidence="1">The glycine cleavage system is composed of four proteins: P, T, L and H. In this organism, the P 'protein' is a heterodimer of two subunits.</text>
</comment>
<comment type="similarity">
    <text evidence="1">Belongs to the GcvP family. N-terminal subunit subfamily.</text>
</comment>
<reference key="1">
    <citation type="journal article" date="2010" name="Environ. Microbiol.">
        <title>The genome of Syntrophomonas wolfei: new insights into syntrophic metabolism and biohydrogen production.</title>
        <authorList>
            <person name="Sieber J.R."/>
            <person name="Sims D.R."/>
            <person name="Han C."/>
            <person name="Kim E."/>
            <person name="Lykidis A."/>
            <person name="Lapidus A.L."/>
            <person name="McDonnald E."/>
            <person name="Rohlin L."/>
            <person name="Culley D.E."/>
            <person name="Gunsalus R."/>
            <person name="McInerney M.J."/>
        </authorList>
    </citation>
    <scope>NUCLEOTIDE SEQUENCE [LARGE SCALE GENOMIC DNA]</scope>
    <source>
        <strain>DSM 2245B / Goettingen</strain>
    </source>
</reference>
<sequence length="438" mass="48402">MRYSPHSPTEVEEMLFSIGMKNKAELFADIPDRLKLGRDLELGPGLTEMELNRHLKELAGKNMNLDDYPCFLGAGAYDHYIPAALDQLLLRSEFYTAYTPYQPEISQGILQAIFEYQTMICALTGMDVANASLYDGASALAEACQMACEGSRRRKVILPATLHPEYLEVVKSYAISGKMEIIMAPEQEGIIDKEATLALLDRDSACLVIQQPNFFGCIEEIAGWEKAVHANKSLLIMVVNPISLGLLKSPGEWGADIVVGEGQPLGNPLSFGGPYLGFMACSKKYMRKMPGRLVGQSVDSNEETCYVLTLQAREQHIRREQASSNICSNEALNALAASIYLSLVGRQGLVDIAARCHQLAIYARRQMENYGLSLKYPQAFFNEFAVELDDPARINRLLLEQGIIGGYELPGALLLAFTEKRSRAEIDRLAALIGGECR</sequence>
<gene>
    <name evidence="1" type="primary">gcvPA</name>
    <name type="ordered locus">Swol_1981</name>
</gene>
<proteinExistence type="inferred from homology"/>
<organism>
    <name type="scientific">Syntrophomonas wolfei subsp. wolfei (strain DSM 2245B / Goettingen)</name>
    <dbReference type="NCBI Taxonomy" id="335541"/>
    <lineage>
        <taxon>Bacteria</taxon>
        <taxon>Bacillati</taxon>
        <taxon>Bacillota</taxon>
        <taxon>Clostridia</taxon>
        <taxon>Eubacteriales</taxon>
        <taxon>Syntrophomonadaceae</taxon>
        <taxon>Syntrophomonas</taxon>
    </lineage>
</organism>
<keyword id="KW-0560">Oxidoreductase</keyword>
<keyword id="KW-1185">Reference proteome</keyword>
<accession>Q0AVH8</accession>
<evidence type="ECO:0000255" key="1">
    <source>
        <dbReference type="HAMAP-Rule" id="MF_00712"/>
    </source>
</evidence>
<dbReference type="EC" id="1.4.4.2" evidence="1"/>
<dbReference type="EMBL" id="CP000448">
    <property type="protein sequence ID" value="ABI69276.1"/>
    <property type="molecule type" value="Genomic_DNA"/>
</dbReference>
<dbReference type="RefSeq" id="WP_011641368.1">
    <property type="nucleotide sequence ID" value="NC_008346.1"/>
</dbReference>
<dbReference type="SMR" id="Q0AVH8"/>
<dbReference type="STRING" id="335541.Swol_1981"/>
<dbReference type="KEGG" id="swo:Swol_1981"/>
<dbReference type="eggNOG" id="COG0403">
    <property type="taxonomic scope" value="Bacteria"/>
</dbReference>
<dbReference type="HOGENOM" id="CLU_004620_0_2_9"/>
<dbReference type="OrthoDB" id="9771867at2"/>
<dbReference type="Proteomes" id="UP000001968">
    <property type="component" value="Chromosome"/>
</dbReference>
<dbReference type="GO" id="GO:0004375">
    <property type="term" value="F:glycine dehydrogenase (decarboxylating) activity"/>
    <property type="evidence" value="ECO:0007669"/>
    <property type="project" value="UniProtKB-EC"/>
</dbReference>
<dbReference type="GO" id="GO:0019464">
    <property type="term" value="P:glycine decarboxylation via glycine cleavage system"/>
    <property type="evidence" value="ECO:0007669"/>
    <property type="project" value="UniProtKB-UniRule"/>
</dbReference>
<dbReference type="GO" id="GO:0009116">
    <property type="term" value="P:nucleoside metabolic process"/>
    <property type="evidence" value="ECO:0007669"/>
    <property type="project" value="InterPro"/>
</dbReference>
<dbReference type="CDD" id="cd00613">
    <property type="entry name" value="GDC-P"/>
    <property type="match status" value="1"/>
</dbReference>
<dbReference type="Gene3D" id="3.90.1150.10">
    <property type="entry name" value="Aspartate Aminotransferase, domain 1"/>
    <property type="match status" value="1"/>
</dbReference>
<dbReference type="Gene3D" id="3.40.640.10">
    <property type="entry name" value="Type I PLP-dependent aspartate aminotransferase-like (Major domain)"/>
    <property type="match status" value="1"/>
</dbReference>
<dbReference type="HAMAP" id="MF_00712">
    <property type="entry name" value="GcvPA"/>
    <property type="match status" value="1"/>
</dbReference>
<dbReference type="InterPro" id="IPR023010">
    <property type="entry name" value="GcvPA"/>
</dbReference>
<dbReference type="InterPro" id="IPR049315">
    <property type="entry name" value="GDC-P_N"/>
</dbReference>
<dbReference type="InterPro" id="IPR020581">
    <property type="entry name" value="GDC_P"/>
</dbReference>
<dbReference type="InterPro" id="IPR015424">
    <property type="entry name" value="PyrdxlP-dep_Trfase"/>
</dbReference>
<dbReference type="InterPro" id="IPR015421">
    <property type="entry name" value="PyrdxlP-dep_Trfase_major"/>
</dbReference>
<dbReference type="InterPro" id="IPR015422">
    <property type="entry name" value="PyrdxlP-dep_Trfase_small"/>
</dbReference>
<dbReference type="NCBIfam" id="NF001696">
    <property type="entry name" value="PRK00451.1"/>
    <property type="match status" value="1"/>
</dbReference>
<dbReference type="PANTHER" id="PTHR42806">
    <property type="entry name" value="GLYCINE CLEAVAGE SYSTEM P-PROTEIN"/>
    <property type="match status" value="1"/>
</dbReference>
<dbReference type="PANTHER" id="PTHR42806:SF1">
    <property type="entry name" value="GLYCINE DEHYDROGENASE (DECARBOXYLATING)"/>
    <property type="match status" value="1"/>
</dbReference>
<dbReference type="Pfam" id="PF02347">
    <property type="entry name" value="GDC-P"/>
    <property type="match status" value="1"/>
</dbReference>
<dbReference type="PIRSF" id="PIRSF006815">
    <property type="entry name" value="GcvPA"/>
    <property type="match status" value="1"/>
</dbReference>
<dbReference type="SUPFAM" id="SSF53383">
    <property type="entry name" value="PLP-dependent transferases"/>
    <property type="match status" value="1"/>
</dbReference>
<protein>
    <recommendedName>
        <fullName evidence="1">Probable glycine dehydrogenase (decarboxylating) subunit 1</fullName>
        <ecNumber evidence="1">1.4.4.2</ecNumber>
    </recommendedName>
    <alternativeName>
        <fullName evidence="1">Glycine cleavage system P-protein subunit 1</fullName>
    </alternativeName>
    <alternativeName>
        <fullName evidence="1">Glycine decarboxylase subunit 1</fullName>
    </alternativeName>
    <alternativeName>
        <fullName evidence="1">Glycine dehydrogenase (aminomethyl-transferring) subunit 1</fullName>
    </alternativeName>
</protein>
<feature type="chain" id="PRO_1000045683" description="Probable glycine dehydrogenase (decarboxylating) subunit 1">
    <location>
        <begin position="1"/>
        <end position="438"/>
    </location>
</feature>
<name>GCSPA_SYNWW</name>